<comment type="function">
    <text evidence="1">Catalyzes the specific phosphorylation of the 3-hydroxyl group of shikimic acid using ATP as a cosubstrate.</text>
</comment>
<comment type="catalytic activity">
    <reaction evidence="1">
        <text>shikimate + ATP = 3-phosphoshikimate + ADP + H(+)</text>
        <dbReference type="Rhea" id="RHEA:13121"/>
        <dbReference type="ChEBI" id="CHEBI:15378"/>
        <dbReference type="ChEBI" id="CHEBI:30616"/>
        <dbReference type="ChEBI" id="CHEBI:36208"/>
        <dbReference type="ChEBI" id="CHEBI:145989"/>
        <dbReference type="ChEBI" id="CHEBI:456216"/>
        <dbReference type="EC" id="2.7.1.71"/>
    </reaction>
</comment>
<comment type="cofactor">
    <cofactor evidence="1">
        <name>Mg(2+)</name>
        <dbReference type="ChEBI" id="CHEBI:18420"/>
    </cofactor>
    <text evidence="1">Binds 1 Mg(2+) ion per subunit.</text>
</comment>
<comment type="pathway">
    <text evidence="1">Metabolic intermediate biosynthesis; chorismate biosynthesis; chorismate from D-erythrose 4-phosphate and phosphoenolpyruvate: step 5/7.</text>
</comment>
<comment type="subunit">
    <text evidence="1">Monomer.</text>
</comment>
<comment type="subcellular location">
    <subcellularLocation>
        <location evidence="1">Cytoplasm</location>
    </subcellularLocation>
</comment>
<comment type="similarity">
    <text evidence="1">Belongs to the shikimate kinase family.</text>
</comment>
<protein>
    <recommendedName>
        <fullName evidence="1">Shikimate kinase</fullName>
        <shortName evidence="1">SK</shortName>
        <ecNumber evidence="1">2.7.1.71</ecNumber>
    </recommendedName>
</protein>
<name>AROK_ACIBS</name>
<evidence type="ECO:0000255" key="1">
    <source>
        <dbReference type="HAMAP-Rule" id="MF_00109"/>
    </source>
</evidence>
<keyword id="KW-0028">Amino-acid biosynthesis</keyword>
<keyword id="KW-0057">Aromatic amino acid biosynthesis</keyword>
<keyword id="KW-0067">ATP-binding</keyword>
<keyword id="KW-0963">Cytoplasm</keyword>
<keyword id="KW-0418">Kinase</keyword>
<keyword id="KW-0460">Magnesium</keyword>
<keyword id="KW-0479">Metal-binding</keyword>
<keyword id="KW-0547">Nucleotide-binding</keyword>
<keyword id="KW-0808">Transferase</keyword>
<dbReference type="EC" id="2.7.1.71" evidence="1"/>
<dbReference type="EMBL" id="CU468230">
    <property type="protein sequence ID" value="CAO99696.1"/>
    <property type="molecule type" value="Genomic_DNA"/>
</dbReference>
<dbReference type="SMR" id="B0VQ33"/>
<dbReference type="KEGG" id="abm:ABSDF0301"/>
<dbReference type="HOGENOM" id="CLU_057607_2_2_6"/>
<dbReference type="UniPathway" id="UPA00053">
    <property type="reaction ID" value="UER00088"/>
</dbReference>
<dbReference type="Proteomes" id="UP000001741">
    <property type="component" value="Chromosome"/>
</dbReference>
<dbReference type="GO" id="GO:0005829">
    <property type="term" value="C:cytosol"/>
    <property type="evidence" value="ECO:0007669"/>
    <property type="project" value="TreeGrafter"/>
</dbReference>
<dbReference type="GO" id="GO:0005524">
    <property type="term" value="F:ATP binding"/>
    <property type="evidence" value="ECO:0007669"/>
    <property type="project" value="UniProtKB-UniRule"/>
</dbReference>
<dbReference type="GO" id="GO:0000287">
    <property type="term" value="F:magnesium ion binding"/>
    <property type="evidence" value="ECO:0007669"/>
    <property type="project" value="UniProtKB-UniRule"/>
</dbReference>
<dbReference type="GO" id="GO:0004765">
    <property type="term" value="F:shikimate kinase activity"/>
    <property type="evidence" value="ECO:0007669"/>
    <property type="project" value="UniProtKB-UniRule"/>
</dbReference>
<dbReference type="GO" id="GO:0008652">
    <property type="term" value="P:amino acid biosynthetic process"/>
    <property type="evidence" value="ECO:0007669"/>
    <property type="project" value="UniProtKB-KW"/>
</dbReference>
<dbReference type="GO" id="GO:0009073">
    <property type="term" value="P:aromatic amino acid family biosynthetic process"/>
    <property type="evidence" value="ECO:0007669"/>
    <property type="project" value="UniProtKB-KW"/>
</dbReference>
<dbReference type="GO" id="GO:0009423">
    <property type="term" value="P:chorismate biosynthetic process"/>
    <property type="evidence" value="ECO:0007669"/>
    <property type="project" value="UniProtKB-UniRule"/>
</dbReference>
<dbReference type="CDD" id="cd00464">
    <property type="entry name" value="SK"/>
    <property type="match status" value="1"/>
</dbReference>
<dbReference type="Gene3D" id="3.40.50.300">
    <property type="entry name" value="P-loop containing nucleotide triphosphate hydrolases"/>
    <property type="match status" value="1"/>
</dbReference>
<dbReference type="HAMAP" id="MF_00109">
    <property type="entry name" value="Shikimate_kinase"/>
    <property type="match status" value="1"/>
</dbReference>
<dbReference type="InterPro" id="IPR027417">
    <property type="entry name" value="P-loop_NTPase"/>
</dbReference>
<dbReference type="InterPro" id="IPR031322">
    <property type="entry name" value="Shikimate/glucono_kinase"/>
</dbReference>
<dbReference type="InterPro" id="IPR000623">
    <property type="entry name" value="Shikimate_kinase/TSH1"/>
</dbReference>
<dbReference type="InterPro" id="IPR023000">
    <property type="entry name" value="Shikimate_kinase_CS"/>
</dbReference>
<dbReference type="NCBIfam" id="NF003456">
    <property type="entry name" value="PRK05057.1"/>
    <property type="match status" value="1"/>
</dbReference>
<dbReference type="PANTHER" id="PTHR21087">
    <property type="entry name" value="SHIKIMATE KINASE"/>
    <property type="match status" value="1"/>
</dbReference>
<dbReference type="PANTHER" id="PTHR21087:SF16">
    <property type="entry name" value="SHIKIMATE KINASE 1, CHLOROPLASTIC"/>
    <property type="match status" value="1"/>
</dbReference>
<dbReference type="Pfam" id="PF01202">
    <property type="entry name" value="SKI"/>
    <property type="match status" value="1"/>
</dbReference>
<dbReference type="PRINTS" id="PR01100">
    <property type="entry name" value="SHIKIMTKNASE"/>
</dbReference>
<dbReference type="SUPFAM" id="SSF52540">
    <property type="entry name" value="P-loop containing nucleoside triphosphate hydrolases"/>
    <property type="match status" value="1"/>
</dbReference>
<dbReference type="PROSITE" id="PS01128">
    <property type="entry name" value="SHIKIMATE_KINASE"/>
    <property type="match status" value="1"/>
</dbReference>
<sequence>MPSKAFETLPNIYLVGPMGAGKTTVGRHLAELLGREFLDSDHEIERKTGATIPWIFEKEGEVGFRTRETVVLNELTSRKALVLATGGGAITQAPNREFLKQRGIVVYLYTPVELQLQRTYRDKNRPLLQVENPEQKLRDLLKIRDPLYREVAHYTIETNQGAARDLAQKILQLILSNKLK</sequence>
<accession>B0VQ33</accession>
<reference key="1">
    <citation type="journal article" date="2008" name="PLoS ONE">
        <title>Comparative analysis of Acinetobacters: three genomes for three lifestyles.</title>
        <authorList>
            <person name="Vallenet D."/>
            <person name="Nordmann P."/>
            <person name="Barbe V."/>
            <person name="Poirel L."/>
            <person name="Mangenot S."/>
            <person name="Bataille E."/>
            <person name="Dossat C."/>
            <person name="Gas S."/>
            <person name="Kreimeyer A."/>
            <person name="Lenoble P."/>
            <person name="Oztas S."/>
            <person name="Poulain J."/>
            <person name="Segurens B."/>
            <person name="Robert C."/>
            <person name="Abergel C."/>
            <person name="Claverie J.-M."/>
            <person name="Raoult D."/>
            <person name="Medigue C."/>
            <person name="Weissenbach J."/>
            <person name="Cruveiller S."/>
        </authorList>
    </citation>
    <scope>NUCLEOTIDE SEQUENCE [LARGE SCALE GENOMIC DNA]</scope>
    <source>
        <strain>SDF</strain>
    </source>
</reference>
<proteinExistence type="inferred from homology"/>
<organism>
    <name type="scientific">Acinetobacter baumannii (strain SDF)</name>
    <dbReference type="NCBI Taxonomy" id="509170"/>
    <lineage>
        <taxon>Bacteria</taxon>
        <taxon>Pseudomonadati</taxon>
        <taxon>Pseudomonadota</taxon>
        <taxon>Gammaproteobacteria</taxon>
        <taxon>Moraxellales</taxon>
        <taxon>Moraxellaceae</taxon>
        <taxon>Acinetobacter</taxon>
        <taxon>Acinetobacter calcoaceticus/baumannii complex</taxon>
    </lineage>
</organism>
<gene>
    <name evidence="1" type="primary">aroK</name>
    <name type="ordered locus">ABSDF0301</name>
</gene>
<feature type="chain" id="PRO_1000094366" description="Shikimate kinase">
    <location>
        <begin position="1"/>
        <end position="180"/>
    </location>
</feature>
<feature type="binding site" evidence="1">
    <location>
        <begin position="19"/>
        <end position="24"/>
    </location>
    <ligand>
        <name>ATP</name>
        <dbReference type="ChEBI" id="CHEBI:30616"/>
    </ligand>
</feature>
<feature type="binding site" evidence="1">
    <location>
        <position position="23"/>
    </location>
    <ligand>
        <name>Mg(2+)</name>
        <dbReference type="ChEBI" id="CHEBI:18420"/>
    </ligand>
</feature>
<feature type="binding site" evidence="1">
    <location>
        <position position="41"/>
    </location>
    <ligand>
        <name>substrate</name>
    </ligand>
</feature>
<feature type="binding site" evidence="1">
    <location>
        <position position="65"/>
    </location>
    <ligand>
        <name>substrate</name>
    </ligand>
</feature>
<feature type="binding site" evidence="1">
    <location>
        <position position="87"/>
    </location>
    <ligand>
        <name>substrate</name>
    </ligand>
</feature>
<feature type="binding site" evidence="1">
    <location>
        <position position="125"/>
    </location>
    <ligand>
        <name>ATP</name>
        <dbReference type="ChEBI" id="CHEBI:30616"/>
    </ligand>
</feature>
<feature type="binding site" evidence="1">
    <location>
        <position position="144"/>
    </location>
    <ligand>
        <name>substrate</name>
    </ligand>
</feature>